<accession>A6R7F0</accession>
<organism>
    <name type="scientific">Ajellomyces capsulatus (strain NAm1 / WU24)</name>
    <name type="common">Darling's disease fungus</name>
    <name type="synonym">Histoplasma capsulatum</name>
    <dbReference type="NCBI Taxonomy" id="2059318"/>
    <lineage>
        <taxon>Eukaryota</taxon>
        <taxon>Fungi</taxon>
        <taxon>Dikarya</taxon>
        <taxon>Ascomycota</taxon>
        <taxon>Pezizomycotina</taxon>
        <taxon>Eurotiomycetes</taxon>
        <taxon>Eurotiomycetidae</taxon>
        <taxon>Onygenales</taxon>
        <taxon>Ajellomycetaceae</taxon>
        <taxon>Histoplasma</taxon>
    </lineage>
</organism>
<sequence>MSPDTVNNAVIDKAFEDNAPLRKRVYSAIASTPEYTSLFEDIAKYATTLRSGLGRDASSACSQVRVAATGEGPAAKKRKLINGSEGAVAGTGAGSANDAALLAGLTADAELQFYVQDLSFAIPQRKKLRLELTRLVSSAAGAREGYLRARNQASNEVEFGIPMSRIQHILCLPVPEKTQRQFNFCIIPEHGDGISPVPDHQLAFEPIVWTIPDGPPRTAYLGSGTPALESANLAETYESYLKRMLDDNLRHTKVICPSEKEFVSPTPEAHRKGDKAYHVKAFRGSKEGFLFFLSTGIFFGFKKPLVFFALENIDTISYTSVLQRTFNLNITARSPAKPDEVQEFELSMIDQSNHPGIDAYIKKHGLQDASLAEARRAKRLNINGVKGGDGGTDSAANHAGESEEEESELVKAQRELEDREDEEEEDYDPGSEGDSDGSGSSSEEEDQDGDGQEDYDGEGKDLVKEELGKMISPKPQYQQTYNG</sequence>
<name>RT106_AJECN</name>
<gene>
    <name type="primary">RTT106</name>
    <name type="ORF">HCAG_05558</name>
</gene>
<reference key="1">
    <citation type="journal article" date="2009" name="Genome Res.">
        <title>Comparative genomic analyses of the human fungal pathogens Coccidioides and their relatives.</title>
        <authorList>
            <person name="Sharpton T.J."/>
            <person name="Stajich J.E."/>
            <person name="Rounsley S.D."/>
            <person name="Gardner M.J."/>
            <person name="Wortman J.R."/>
            <person name="Jordar V.S."/>
            <person name="Maiti R."/>
            <person name="Kodira C.D."/>
            <person name="Neafsey D.E."/>
            <person name="Zeng Q."/>
            <person name="Hung C.-Y."/>
            <person name="McMahan C."/>
            <person name="Muszewska A."/>
            <person name="Grynberg M."/>
            <person name="Mandel M.A."/>
            <person name="Kellner E.M."/>
            <person name="Barker B.M."/>
            <person name="Galgiani J.N."/>
            <person name="Orbach M.J."/>
            <person name="Kirkland T.N."/>
            <person name="Cole G.T."/>
            <person name="Henn M.R."/>
            <person name="Birren B.W."/>
            <person name="Taylor J.W."/>
        </authorList>
    </citation>
    <scope>NUCLEOTIDE SEQUENCE [LARGE SCALE GENOMIC DNA]</scope>
    <source>
        <strain>NAm1 / WU24</strain>
    </source>
</reference>
<evidence type="ECO:0000250" key="1"/>
<evidence type="ECO:0000256" key="2">
    <source>
        <dbReference type="SAM" id="MobiDB-lite"/>
    </source>
</evidence>
<evidence type="ECO:0000305" key="3"/>
<keyword id="KW-0143">Chaperone</keyword>
<keyword id="KW-0158">Chromosome</keyword>
<keyword id="KW-0238">DNA-binding</keyword>
<keyword id="KW-0539">Nucleus</keyword>
<keyword id="KW-1185">Reference proteome</keyword>
<keyword id="KW-0804">Transcription</keyword>
<keyword id="KW-0805">Transcription regulation</keyword>
<dbReference type="EMBL" id="CH476659">
    <property type="protein sequence ID" value="EDN09059.1"/>
    <property type="molecule type" value="Genomic_DNA"/>
</dbReference>
<dbReference type="SMR" id="A6R7F0"/>
<dbReference type="STRING" id="339724.A6R7F0"/>
<dbReference type="KEGG" id="aje:HCAG_05558"/>
<dbReference type="VEuPathDB" id="FungiDB:HCAG_05558"/>
<dbReference type="HOGENOM" id="CLU_033828_0_0_1"/>
<dbReference type="OMA" id="AMPEAHR"/>
<dbReference type="OrthoDB" id="8833at299071"/>
<dbReference type="Proteomes" id="UP000009297">
    <property type="component" value="Unassembled WGS sequence"/>
</dbReference>
<dbReference type="GO" id="GO:0005694">
    <property type="term" value="C:chromosome"/>
    <property type="evidence" value="ECO:0007669"/>
    <property type="project" value="UniProtKB-SubCell"/>
</dbReference>
<dbReference type="GO" id="GO:0005634">
    <property type="term" value="C:nucleus"/>
    <property type="evidence" value="ECO:0007669"/>
    <property type="project" value="UniProtKB-SubCell"/>
</dbReference>
<dbReference type="GO" id="GO:0003677">
    <property type="term" value="F:DNA binding"/>
    <property type="evidence" value="ECO:0007669"/>
    <property type="project" value="UniProtKB-KW"/>
</dbReference>
<dbReference type="GO" id="GO:0042393">
    <property type="term" value="F:histone binding"/>
    <property type="evidence" value="ECO:0007669"/>
    <property type="project" value="TreeGrafter"/>
</dbReference>
<dbReference type="GO" id="GO:0031491">
    <property type="term" value="F:nucleosome binding"/>
    <property type="evidence" value="ECO:0007669"/>
    <property type="project" value="TreeGrafter"/>
</dbReference>
<dbReference type="Gene3D" id="2.30.29.120">
    <property type="match status" value="1"/>
</dbReference>
<dbReference type="Gene3D" id="2.30.29.30">
    <property type="entry name" value="Pleckstrin-homology domain (PH domain)/Phosphotyrosine-binding domain (PTB)"/>
    <property type="match status" value="1"/>
</dbReference>
<dbReference type="InterPro" id="IPR011993">
    <property type="entry name" value="PH-like_dom_sf"/>
</dbReference>
<dbReference type="InterPro" id="IPR013719">
    <property type="entry name" value="RTT106/SPT16-like_middle_dom"/>
</dbReference>
<dbReference type="InterPro" id="IPR050454">
    <property type="entry name" value="RTT106/SSRP1_HistChap/FACT"/>
</dbReference>
<dbReference type="PANTHER" id="PTHR45849">
    <property type="entry name" value="FACT COMPLEX SUBUNIT SSRP1"/>
    <property type="match status" value="1"/>
</dbReference>
<dbReference type="PANTHER" id="PTHR45849:SF3">
    <property type="entry name" value="HISTONE CHAPERONE RTT106"/>
    <property type="match status" value="1"/>
</dbReference>
<dbReference type="Pfam" id="PF08512">
    <property type="entry name" value="Rttp106-like_middle"/>
    <property type="match status" value="1"/>
</dbReference>
<dbReference type="SMART" id="SM01287">
    <property type="entry name" value="Rtt106"/>
    <property type="match status" value="1"/>
</dbReference>
<dbReference type="SUPFAM" id="SSF50729">
    <property type="entry name" value="PH domain-like"/>
    <property type="match status" value="1"/>
</dbReference>
<proteinExistence type="inferred from homology"/>
<protein>
    <recommendedName>
        <fullName>Histone chaperone RTT106</fullName>
    </recommendedName>
</protein>
<feature type="chain" id="PRO_0000320480" description="Histone chaperone RTT106">
    <location>
        <begin position="1"/>
        <end position="483"/>
    </location>
</feature>
<feature type="region of interest" description="Disordered" evidence="2">
    <location>
        <begin position="382"/>
        <end position="483"/>
    </location>
</feature>
<feature type="compositionally biased region" description="Basic and acidic residues" evidence="2">
    <location>
        <begin position="408"/>
        <end position="417"/>
    </location>
</feature>
<feature type="compositionally biased region" description="Acidic residues" evidence="2">
    <location>
        <begin position="418"/>
        <end position="435"/>
    </location>
</feature>
<feature type="compositionally biased region" description="Acidic residues" evidence="2">
    <location>
        <begin position="442"/>
        <end position="456"/>
    </location>
</feature>
<feature type="compositionally biased region" description="Basic and acidic residues" evidence="2">
    <location>
        <begin position="457"/>
        <end position="468"/>
    </location>
</feature>
<comment type="function">
    <text evidence="1">Histones H3 and H4 chaperone involved in the nucleosome formation and heterochromatin silencing. Required for the deposition of H3K56ac-carrying H3-H4 complex onto newly-replicated DNA. Plays a role in the transcriptional regulation of the cell-cycle dependent histone genes by creating a repressive structure at the core histone gene promoter (By similarity).</text>
</comment>
<comment type="subunit">
    <text evidence="1">Interacts with histones H3 and H4.</text>
</comment>
<comment type="subcellular location">
    <subcellularLocation>
        <location evidence="1">Nucleus</location>
    </subcellularLocation>
    <subcellularLocation>
        <location evidence="1">Chromosome</location>
    </subcellularLocation>
</comment>
<comment type="similarity">
    <text evidence="3">Belongs to the RTT106 family.</text>
</comment>